<organism>
    <name type="scientific">Thermobifida fusca (strain YX)</name>
    <dbReference type="NCBI Taxonomy" id="269800"/>
    <lineage>
        <taxon>Bacteria</taxon>
        <taxon>Bacillati</taxon>
        <taxon>Actinomycetota</taxon>
        <taxon>Actinomycetes</taxon>
        <taxon>Streptosporangiales</taxon>
        <taxon>Nocardiopsidaceae</taxon>
        <taxon>Thermobifida</taxon>
    </lineage>
</organism>
<keyword id="KW-0240">DNA-directed RNA polymerase</keyword>
<keyword id="KW-0548">Nucleotidyltransferase</keyword>
<keyword id="KW-0804">Transcription</keyword>
<keyword id="KW-0808">Transferase</keyword>
<gene>
    <name evidence="1" type="primary">rpoB</name>
    <name type="ordered locus">Tfu_2654</name>
</gene>
<evidence type="ECO:0000255" key="1">
    <source>
        <dbReference type="HAMAP-Rule" id="MF_01321"/>
    </source>
</evidence>
<dbReference type="EC" id="2.7.7.6" evidence="1"/>
<dbReference type="EMBL" id="CP000088">
    <property type="protein sequence ID" value="AAZ56687.1"/>
    <property type="molecule type" value="Genomic_DNA"/>
</dbReference>
<dbReference type="RefSeq" id="WP_011293077.1">
    <property type="nucleotide sequence ID" value="NC_007333.1"/>
</dbReference>
<dbReference type="SMR" id="Q47LI5"/>
<dbReference type="STRING" id="269800.Tfu_2654"/>
<dbReference type="KEGG" id="tfu:Tfu_2654"/>
<dbReference type="eggNOG" id="COG0085">
    <property type="taxonomic scope" value="Bacteria"/>
</dbReference>
<dbReference type="HOGENOM" id="CLU_000524_4_1_11"/>
<dbReference type="OrthoDB" id="9803954at2"/>
<dbReference type="GO" id="GO:0000428">
    <property type="term" value="C:DNA-directed RNA polymerase complex"/>
    <property type="evidence" value="ECO:0007669"/>
    <property type="project" value="UniProtKB-KW"/>
</dbReference>
<dbReference type="GO" id="GO:0003677">
    <property type="term" value="F:DNA binding"/>
    <property type="evidence" value="ECO:0007669"/>
    <property type="project" value="UniProtKB-UniRule"/>
</dbReference>
<dbReference type="GO" id="GO:0003899">
    <property type="term" value="F:DNA-directed RNA polymerase activity"/>
    <property type="evidence" value="ECO:0007669"/>
    <property type="project" value="UniProtKB-UniRule"/>
</dbReference>
<dbReference type="GO" id="GO:0032549">
    <property type="term" value="F:ribonucleoside binding"/>
    <property type="evidence" value="ECO:0007669"/>
    <property type="project" value="InterPro"/>
</dbReference>
<dbReference type="GO" id="GO:0006351">
    <property type="term" value="P:DNA-templated transcription"/>
    <property type="evidence" value="ECO:0007669"/>
    <property type="project" value="UniProtKB-UniRule"/>
</dbReference>
<dbReference type="CDD" id="cd00653">
    <property type="entry name" value="RNA_pol_B_RPB2"/>
    <property type="match status" value="1"/>
</dbReference>
<dbReference type="FunFam" id="3.90.1110.10:FF:000001">
    <property type="entry name" value="DNA-directed RNA polymerase subunit beta"/>
    <property type="match status" value="1"/>
</dbReference>
<dbReference type="FunFam" id="3.90.1800.10:FF:000001">
    <property type="entry name" value="DNA-directed RNA polymerase subunit beta"/>
    <property type="match status" value="1"/>
</dbReference>
<dbReference type="Gene3D" id="2.40.50.100">
    <property type="match status" value="1"/>
</dbReference>
<dbReference type="Gene3D" id="2.40.50.150">
    <property type="match status" value="1"/>
</dbReference>
<dbReference type="Gene3D" id="3.90.1100.10">
    <property type="match status" value="1"/>
</dbReference>
<dbReference type="Gene3D" id="2.30.150.10">
    <property type="entry name" value="DNA-directed RNA polymerase, beta subunit, external 1 domain"/>
    <property type="match status" value="1"/>
</dbReference>
<dbReference type="Gene3D" id="2.40.270.10">
    <property type="entry name" value="DNA-directed RNA polymerase, subunit 2, domain 6"/>
    <property type="match status" value="1"/>
</dbReference>
<dbReference type="Gene3D" id="3.90.1800.10">
    <property type="entry name" value="RNA polymerase alpha subunit dimerisation domain"/>
    <property type="match status" value="1"/>
</dbReference>
<dbReference type="Gene3D" id="3.90.1110.10">
    <property type="entry name" value="RNA polymerase Rpb2, domain 2"/>
    <property type="match status" value="1"/>
</dbReference>
<dbReference type="HAMAP" id="MF_01321">
    <property type="entry name" value="RNApol_bact_RpoB"/>
    <property type="match status" value="1"/>
</dbReference>
<dbReference type="InterPro" id="IPR042107">
    <property type="entry name" value="DNA-dir_RNA_pol_bsu_ext_1_sf"/>
</dbReference>
<dbReference type="InterPro" id="IPR019462">
    <property type="entry name" value="DNA-dir_RNA_pol_bsu_external_1"/>
</dbReference>
<dbReference type="InterPro" id="IPR015712">
    <property type="entry name" value="DNA-dir_RNA_pol_su2"/>
</dbReference>
<dbReference type="InterPro" id="IPR007120">
    <property type="entry name" value="DNA-dir_RNAP_su2_dom"/>
</dbReference>
<dbReference type="InterPro" id="IPR037033">
    <property type="entry name" value="DNA-dir_RNAP_su2_hyb_sf"/>
</dbReference>
<dbReference type="InterPro" id="IPR010243">
    <property type="entry name" value="RNA_pol_bsu_bac"/>
</dbReference>
<dbReference type="InterPro" id="IPR007121">
    <property type="entry name" value="RNA_pol_bsu_CS"/>
</dbReference>
<dbReference type="InterPro" id="IPR007644">
    <property type="entry name" value="RNA_pol_bsu_protrusion"/>
</dbReference>
<dbReference type="InterPro" id="IPR007642">
    <property type="entry name" value="RNA_pol_Rpb2_2"/>
</dbReference>
<dbReference type="InterPro" id="IPR037034">
    <property type="entry name" value="RNA_pol_Rpb2_2_sf"/>
</dbReference>
<dbReference type="InterPro" id="IPR007645">
    <property type="entry name" value="RNA_pol_Rpb2_3"/>
</dbReference>
<dbReference type="InterPro" id="IPR007641">
    <property type="entry name" value="RNA_pol_Rpb2_7"/>
</dbReference>
<dbReference type="InterPro" id="IPR014724">
    <property type="entry name" value="RNA_pol_RPB2_OB-fold"/>
</dbReference>
<dbReference type="NCBIfam" id="NF001616">
    <property type="entry name" value="PRK00405.1"/>
    <property type="match status" value="1"/>
</dbReference>
<dbReference type="NCBIfam" id="TIGR02013">
    <property type="entry name" value="rpoB"/>
    <property type="match status" value="1"/>
</dbReference>
<dbReference type="PANTHER" id="PTHR20856">
    <property type="entry name" value="DNA-DIRECTED RNA POLYMERASE I SUBUNIT 2"/>
    <property type="match status" value="1"/>
</dbReference>
<dbReference type="Pfam" id="PF04563">
    <property type="entry name" value="RNA_pol_Rpb2_1"/>
    <property type="match status" value="1"/>
</dbReference>
<dbReference type="Pfam" id="PF04561">
    <property type="entry name" value="RNA_pol_Rpb2_2"/>
    <property type="match status" value="1"/>
</dbReference>
<dbReference type="Pfam" id="PF04565">
    <property type="entry name" value="RNA_pol_Rpb2_3"/>
    <property type="match status" value="1"/>
</dbReference>
<dbReference type="Pfam" id="PF10385">
    <property type="entry name" value="RNA_pol_Rpb2_45"/>
    <property type="match status" value="1"/>
</dbReference>
<dbReference type="Pfam" id="PF00562">
    <property type="entry name" value="RNA_pol_Rpb2_6"/>
    <property type="match status" value="1"/>
</dbReference>
<dbReference type="Pfam" id="PF04560">
    <property type="entry name" value="RNA_pol_Rpb2_7"/>
    <property type="match status" value="1"/>
</dbReference>
<dbReference type="SUPFAM" id="SSF64484">
    <property type="entry name" value="beta and beta-prime subunits of DNA dependent RNA-polymerase"/>
    <property type="match status" value="1"/>
</dbReference>
<dbReference type="PROSITE" id="PS01166">
    <property type="entry name" value="RNA_POL_BETA"/>
    <property type="match status" value="1"/>
</dbReference>
<feature type="chain" id="PRO_0000224115" description="DNA-directed RNA polymerase subunit beta">
    <location>
        <begin position="1"/>
        <end position="1155"/>
    </location>
</feature>
<accession>Q47LI5</accession>
<comment type="function">
    <text evidence="1">DNA-dependent RNA polymerase catalyzes the transcription of DNA into RNA using the four ribonucleoside triphosphates as substrates.</text>
</comment>
<comment type="catalytic activity">
    <reaction evidence="1">
        <text>RNA(n) + a ribonucleoside 5'-triphosphate = RNA(n+1) + diphosphate</text>
        <dbReference type="Rhea" id="RHEA:21248"/>
        <dbReference type="Rhea" id="RHEA-COMP:14527"/>
        <dbReference type="Rhea" id="RHEA-COMP:17342"/>
        <dbReference type="ChEBI" id="CHEBI:33019"/>
        <dbReference type="ChEBI" id="CHEBI:61557"/>
        <dbReference type="ChEBI" id="CHEBI:140395"/>
        <dbReference type="EC" id="2.7.7.6"/>
    </reaction>
</comment>
<comment type="subunit">
    <text evidence="1">The RNAP catalytic core consists of 2 alpha, 1 beta, 1 beta' and 1 omega subunit. When a sigma factor is associated with the core the holoenzyme is formed, which can initiate transcription.</text>
</comment>
<comment type="similarity">
    <text evidence="1">Belongs to the RNA polymerase beta chain family.</text>
</comment>
<sequence>MAASRIASANALGPNRVSFARIKEPLEVPNLLALQTESFDWLLGNERWRARVEAARKAGRKDIPEQSGLEEIFEEISPIEDFSGTMSLSFRDHRFEPPKYSEEECKDKDMTYSAPMFVTAEFINNDTGEIKSQTVFMGDFPLMTAKGTFIINGTERVVVSQLVRSPGVYFDSQMDKSSDKELYGCKIIPSRGAWLEFEIDKRDFVGVRIDRKRKQAVTILLKALGWTTDQILERFGEYESIRATLEKDPTAGTDDALLDIYRKLRPGEPPTKEAAQALLENLYFNPKRYDLAKVGRYKINKKLGLEIDITQGTLTEEDIVATVDYLVRLHAGEKELVRPHGTFPIEVDDIDHFGNRRLRTVGELIQNQVRLGLARMERVVRERMTTQDVEAITPQTLINIRPVVASIREFFGTSQLSQFMDQTNPLAGLTHKRRLSALGPGGLSRERAGFEVRDVHPSHYGRMCPIETPEGPNIGLIGSLAAYARVNSFGFIETPYRKVVDGRITDEVVYLTADEEDRYVIAQANTPVNPDGTFAESQVLARRKGGEFESVAAEEVHYMDISPRQMVSVATAMIPFLEHDDANRALMGSNMQRQAVPLLRAEAPLVGTGMEYRAATDAGDVILAEKSGVVEDVTADYITVLADDGTRKTYRVHKFRRTNQGTCFNQRPIVEEGQRVEEGQVLADGPSTEAGEMALGKNLLVAYMSWEGHNYEDAIVLSQRLVEEDILSSIHIEEHEVDARETKLGPEEITREIPNVSEEVLADLDERGIIRIGAEVVDGDILVGKVTPKGETELTPEERLLRAIFGEKAREVRDTSLKVPHGESGKVIGVRVFSREEGDELPPGVNELVRVYVAQKRKITDGDKLAGRHGNKGVIAKILPKEDMPFLEDGTPVDIVLNPLGVPGRMNIGQIMEMHLGWLAKHGWKVEGDDAEWKRRLRDIGAHEAPPNSKVATPVFDGAREDEISGLLSCVLPDQDGDILVNKFGKAKLYDGRTGEPFKEPVAVGYAYFLKLHHLVDDKIHARSTGPYSMITQQPLGGKAQFGGQRFGEMEVWALEAYGAAYALQELLTIKSDDINGRVKVYEAIVKGENIPEPGIPESFKVLIKEMQSLCLNVEVLSRDGMSIEMRDSEEDVFRAAEELGIDLGRREPSSVEEV</sequence>
<name>RPOB_THEFY</name>
<protein>
    <recommendedName>
        <fullName evidence="1">DNA-directed RNA polymerase subunit beta</fullName>
        <shortName evidence="1">RNAP subunit beta</shortName>
        <ecNumber evidence="1">2.7.7.6</ecNumber>
    </recommendedName>
    <alternativeName>
        <fullName evidence="1">RNA polymerase subunit beta</fullName>
    </alternativeName>
    <alternativeName>
        <fullName evidence="1">Transcriptase subunit beta</fullName>
    </alternativeName>
</protein>
<reference key="1">
    <citation type="journal article" date="2007" name="J. Bacteriol.">
        <title>Genome sequence and analysis of the soil cellulolytic actinomycete Thermobifida fusca YX.</title>
        <authorList>
            <person name="Lykidis A."/>
            <person name="Mavromatis K."/>
            <person name="Ivanova N."/>
            <person name="Anderson I."/>
            <person name="Land M."/>
            <person name="DiBartolo G."/>
            <person name="Martinez M."/>
            <person name="Lapidus A."/>
            <person name="Lucas S."/>
            <person name="Copeland A."/>
            <person name="Richardson P."/>
            <person name="Wilson D.B."/>
            <person name="Kyrpides N."/>
        </authorList>
    </citation>
    <scope>NUCLEOTIDE SEQUENCE [LARGE SCALE GENOMIC DNA]</scope>
    <source>
        <strain>YX</strain>
    </source>
</reference>
<proteinExistence type="inferred from homology"/>